<sequence>MAEEAPAPVVAPVEAPTPILGEPMDLMTALQLVMKKSSAHDGLVKGLREAAKSIEKHAAQLCVLAEDCDQPDYVKLVKALCAEHNVHLVTVPSAKTLGEWAGLCKIDTEGKARKVVGCSCIVVKDYGEESEGLNIVQQYVKSQ</sequence>
<organism>
    <name type="scientific">Hordeum vulgare</name>
    <name type="common">Barley</name>
    <dbReference type="NCBI Taxonomy" id="4513"/>
    <lineage>
        <taxon>Eukaryota</taxon>
        <taxon>Viridiplantae</taxon>
        <taxon>Streptophyta</taxon>
        <taxon>Embryophyta</taxon>
        <taxon>Tracheophyta</taxon>
        <taxon>Spermatophyta</taxon>
        <taxon>Magnoliopsida</taxon>
        <taxon>Liliopsida</taxon>
        <taxon>Poales</taxon>
        <taxon>Poaceae</taxon>
        <taxon>BOP clade</taxon>
        <taxon>Pooideae</taxon>
        <taxon>Triticodae</taxon>
        <taxon>Triticeae</taxon>
        <taxon>Hordeinae</taxon>
        <taxon>Hordeum</taxon>
    </lineage>
</organism>
<dbReference type="EMBL" id="AF067732">
    <property type="protein sequence ID" value="AAD39838.1"/>
    <property type="molecule type" value="mRNA"/>
</dbReference>
<dbReference type="SMR" id="Q9XHS0"/>
<dbReference type="ExpressionAtlas" id="Q9XHS0">
    <property type="expression patterns" value="baseline and differential"/>
</dbReference>
<dbReference type="GO" id="GO:1990904">
    <property type="term" value="C:ribonucleoprotein complex"/>
    <property type="evidence" value="ECO:0007669"/>
    <property type="project" value="UniProtKB-KW"/>
</dbReference>
<dbReference type="GO" id="GO:0005840">
    <property type="term" value="C:ribosome"/>
    <property type="evidence" value="ECO:0007669"/>
    <property type="project" value="UniProtKB-KW"/>
</dbReference>
<dbReference type="GO" id="GO:0003735">
    <property type="term" value="F:structural constituent of ribosome"/>
    <property type="evidence" value="ECO:0007669"/>
    <property type="project" value="InterPro"/>
</dbReference>
<dbReference type="GO" id="GO:0006412">
    <property type="term" value="P:translation"/>
    <property type="evidence" value="ECO:0007669"/>
    <property type="project" value="InterPro"/>
</dbReference>
<dbReference type="FunFam" id="3.30.1330.30:FF:000013">
    <property type="entry name" value="40S ribosomal protein S12"/>
    <property type="match status" value="1"/>
</dbReference>
<dbReference type="Gene3D" id="3.30.1330.30">
    <property type="match status" value="1"/>
</dbReference>
<dbReference type="InterPro" id="IPR029064">
    <property type="entry name" value="Ribosomal_eL30-like_sf"/>
</dbReference>
<dbReference type="InterPro" id="IPR004038">
    <property type="entry name" value="Ribosomal_eL8/eL30/eS12/Gad45"/>
</dbReference>
<dbReference type="InterPro" id="IPR000530">
    <property type="entry name" value="Ribosomal_eS12"/>
</dbReference>
<dbReference type="InterPro" id="IPR047860">
    <property type="entry name" value="Ribosomal_eS12_CS"/>
</dbReference>
<dbReference type="PANTHER" id="PTHR11843">
    <property type="entry name" value="40S RIBOSOMAL PROTEIN S12"/>
    <property type="match status" value="1"/>
</dbReference>
<dbReference type="Pfam" id="PF01248">
    <property type="entry name" value="Ribosomal_L7Ae"/>
    <property type="match status" value="1"/>
</dbReference>
<dbReference type="PRINTS" id="PR00972">
    <property type="entry name" value="RIBSOMALS12E"/>
</dbReference>
<dbReference type="SUPFAM" id="SSF55315">
    <property type="entry name" value="L30e-like"/>
    <property type="match status" value="1"/>
</dbReference>
<dbReference type="PROSITE" id="PS01189">
    <property type="entry name" value="RIBOSOMAL_S12E"/>
    <property type="match status" value="1"/>
</dbReference>
<proteinExistence type="evidence at transcript level"/>
<protein>
    <recommendedName>
        <fullName evidence="1">Small ribosomal subunit protein eS12</fullName>
    </recommendedName>
    <alternativeName>
        <fullName>40S ribosomal protein S12</fullName>
    </alternativeName>
</protein>
<reference key="1">
    <citation type="submission" date="1998-05" db="EMBL/GenBank/DDBJ databases">
        <title>An unique S12 protein sequence from barley, Hordeum vulgare L. cv. Himalaya, with sequence relatedness to animal S12 proteins of 40S small ribosome subunit.</title>
        <authorList>
            <person name="Robertson M."/>
            <person name="Asami T."/>
        </authorList>
    </citation>
    <scope>NUCLEOTIDE SEQUENCE [MRNA]</scope>
    <source>
        <strain>cv. Himalaya</strain>
        <tissue>Leaf</tissue>
    </source>
</reference>
<feature type="chain" id="PRO_0000122336" description="Small ribosomal subunit protein eS12">
    <location>
        <begin position="1"/>
        <end position="143"/>
    </location>
</feature>
<name>RS12_HORVU</name>
<accession>Q9XHS0</accession>
<evidence type="ECO:0000305" key="1"/>
<keyword id="KW-0687">Ribonucleoprotein</keyword>
<keyword id="KW-0689">Ribosomal protein</keyword>
<comment type="similarity">
    <text evidence="1">Belongs to the eukaryotic ribosomal protein eS12 family.</text>
</comment>
<gene>
    <name type="primary">RPS12</name>
</gene>